<name>ATPD_BRASO</name>
<sequence length="186" mass="19589">MAAEDPSVSGVSGRYATALFELARDEKSVDAVKADLDKFNALLDESADLKRLVRSPVFGADTQLKALNAVLDKAGIAGVAANVLRVLTTNRRLFAVADVIRAFNALVAKYKGEATADVTVAEPISDKNLDALKAALKTVTGKDVALNVKVDPAIIGGLVVKLGSRMIDSSLRTKLNSIKHAMKEAG</sequence>
<gene>
    <name evidence="1" type="primary">atpH</name>
    <name type="ordered locus">BRADO0416</name>
</gene>
<protein>
    <recommendedName>
        <fullName evidence="1">ATP synthase subunit delta</fullName>
    </recommendedName>
    <alternativeName>
        <fullName evidence="1">ATP synthase F(1) sector subunit delta</fullName>
    </alternativeName>
    <alternativeName>
        <fullName evidence="1">F-type ATPase subunit delta</fullName>
        <shortName evidence="1">F-ATPase subunit delta</shortName>
    </alternativeName>
</protein>
<feature type="chain" id="PRO_0000382067" description="ATP synthase subunit delta">
    <location>
        <begin position="1"/>
        <end position="186"/>
    </location>
</feature>
<evidence type="ECO:0000255" key="1">
    <source>
        <dbReference type="HAMAP-Rule" id="MF_01416"/>
    </source>
</evidence>
<evidence type="ECO:0000305" key="2"/>
<accession>A4YKD7</accession>
<comment type="function">
    <text evidence="1">F(1)F(0) ATP synthase produces ATP from ADP in the presence of a proton or sodium gradient. F-type ATPases consist of two structural domains, F(1) containing the extramembraneous catalytic core and F(0) containing the membrane proton channel, linked together by a central stalk and a peripheral stalk. During catalysis, ATP synthesis in the catalytic domain of F(1) is coupled via a rotary mechanism of the central stalk subunits to proton translocation.</text>
</comment>
<comment type="function">
    <text evidence="1">This protein is part of the stalk that links CF(0) to CF(1). It either transmits conformational changes from CF(0) to CF(1) or is implicated in proton conduction.</text>
</comment>
<comment type="subunit">
    <text evidence="1">F-type ATPases have 2 components, F(1) - the catalytic core - and F(0) - the membrane proton channel. F(1) has five subunits: alpha(3), beta(3), gamma(1), delta(1), epsilon(1). CF(0) has four main subunits: a(1), b(1), b'(1) and c(10-14). The alpha and beta chains form an alternating ring which encloses part of the gamma chain. F(1) is attached to F(0) by a central stalk formed by the gamma and epsilon chains, while a peripheral stalk is formed by the delta, b and b' chains.</text>
</comment>
<comment type="subcellular location">
    <subcellularLocation>
        <location evidence="1">Cell inner membrane</location>
        <topology evidence="1">Peripheral membrane protein</topology>
    </subcellularLocation>
</comment>
<comment type="similarity">
    <text evidence="1">Belongs to the ATPase delta chain family.</text>
</comment>
<comment type="sequence caution" evidence="2">
    <conflict type="erroneous initiation">
        <sequence resource="EMBL-CDS" id="CAL74363"/>
    </conflict>
</comment>
<reference key="1">
    <citation type="journal article" date="2007" name="Science">
        <title>Legumes symbioses: absence of nod genes in photosynthetic bradyrhizobia.</title>
        <authorList>
            <person name="Giraud E."/>
            <person name="Moulin L."/>
            <person name="Vallenet D."/>
            <person name="Barbe V."/>
            <person name="Cytryn E."/>
            <person name="Avarre J.-C."/>
            <person name="Jaubert M."/>
            <person name="Simon D."/>
            <person name="Cartieaux F."/>
            <person name="Prin Y."/>
            <person name="Bena G."/>
            <person name="Hannibal L."/>
            <person name="Fardoux J."/>
            <person name="Kojadinovic M."/>
            <person name="Vuillet L."/>
            <person name="Lajus A."/>
            <person name="Cruveiller S."/>
            <person name="Rouy Z."/>
            <person name="Mangenot S."/>
            <person name="Segurens B."/>
            <person name="Dossat C."/>
            <person name="Franck W.L."/>
            <person name="Chang W.-S."/>
            <person name="Saunders E."/>
            <person name="Bruce D."/>
            <person name="Richardson P."/>
            <person name="Normand P."/>
            <person name="Dreyfus B."/>
            <person name="Pignol D."/>
            <person name="Stacey G."/>
            <person name="Emerich D."/>
            <person name="Vermeglio A."/>
            <person name="Medigue C."/>
            <person name="Sadowsky M."/>
        </authorList>
    </citation>
    <scope>NUCLEOTIDE SEQUENCE [LARGE SCALE GENOMIC DNA]</scope>
    <source>
        <strain>ORS 278</strain>
    </source>
</reference>
<keyword id="KW-0066">ATP synthesis</keyword>
<keyword id="KW-0997">Cell inner membrane</keyword>
<keyword id="KW-1003">Cell membrane</keyword>
<keyword id="KW-0139">CF(1)</keyword>
<keyword id="KW-0375">Hydrogen ion transport</keyword>
<keyword id="KW-0406">Ion transport</keyword>
<keyword id="KW-0472">Membrane</keyword>
<keyword id="KW-1185">Reference proteome</keyword>
<keyword id="KW-0813">Transport</keyword>
<dbReference type="EMBL" id="CU234118">
    <property type="protein sequence ID" value="CAL74363.1"/>
    <property type="status" value="ALT_INIT"/>
    <property type="molecule type" value="Genomic_DNA"/>
</dbReference>
<dbReference type="RefSeq" id="WP_041755997.1">
    <property type="nucleotide sequence ID" value="NC_009445.1"/>
</dbReference>
<dbReference type="SMR" id="A4YKD7"/>
<dbReference type="STRING" id="114615.BRADO0416"/>
<dbReference type="KEGG" id="bra:BRADO0416"/>
<dbReference type="eggNOG" id="COG0712">
    <property type="taxonomic scope" value="Bacteria"/>
</dbReference>
<dbReference type="HOGENOM" id="CLU_085114_0_1_5"/>
<dbReference type="OrthoDB" id="9796185at2"/>
<dbReference type="Proteomes" id="UP000001994">
    <property type="component" value="Chromosome"/>
</dbReference>
<dbReference type="GO" id="GO:0005886">
    <property type="term" value="C:plasma membrane"/>
    <property type="evidence" value="ECO:0007669"/>
    <property type="project" value="UniProtKB-SubCell"/>
</dbReference>
<dbReference type="GO" id="GO:0045259">
    <property type="term" value="C:proton-transporting ATP synthase complex"/>
    <property type="evidence" value="ECO:0007669"/>
    <property type="project" value="UniProtKB-KW"/>
</dbReference>
<dbReference type="GO" id="GO:0046933">
    <property type="term" value="F:proton-transporting ATP synthase activity, rotational mechanism"/>
    <property type="evidence" value="ECO:0007669"/>
    <property type="project" value="UniProtKB-UniRule"/>
</dbReference>
<dbReference type="Gene3D" id="1.10.520.20">
    <property type="entry name" value="N-terminal domain of the delta subunit of the F1F0-ATP synthase"/>
    <property type="match status" value="1"/>
</dbReference>
<dbReference type="HAMAP" id="MF_01416">
    <property type="entry name" value="ATP_synth_delta_bact"/>
    <property type="match status" value="1"/>
</dbReference>
<dbReference type="InterPro" id="IPR026015">
    <property type="entry name" value="ATP_synth_OSCP/delta_N_sf"/>
</dbReference>
<dbReference type="InterPro" id="IPR020781">
    <property type="entry name" value="ATPase_OSCP/d_CS"/>
</dbReference>
<dbReference type="InterPro" id="IPR000711">
    <property type="entry name" value="ATPase_OSCP/dsu"/>
</dbReference>
<dbReference type="NCBIfam" id="TIGR01145">
    <property type="entry name" value="ATP_synt_delta"/>
    <property type="match status" value="1"/>
</dbReference>
<dbReference type="NCBIfam" id="NF004406">
    <property type="entry name" value="PRK05758.3-2"/>
    <property type="match status" value="1"/>
</dbReference>
<dbReference type="PANTHER" id="PTHR11910">
    <property type="entry name" value="ATP SYNTHASE DELTA CHAIN"/>
    <property type="match status" value="1"/>
</dbReference>
<dbReference type="Pfam" id="PF00213">
    <property type="entry name" value="OSCP"/>
    <property type="match status" value="1"/>
</dbReference>
<dbReference type="PRINTS" id="PR00125">
    <property type="entry name" value="ATPASEDELTA"/>
</dbReference>
<dbReference type="SUPFAM" id="SSF47928">
    <property type="entry name" value="N-terminal domain of the delta subunit of the F1F0-ATP synthase"/>
    <property type="match status" value="1"/>
</dbReference>
<dbReference type="PROSITE" id="PS00389">
    <property type="entry name" value="ATPASE_DELTA"/>
    <property type="match status" value="1"/>
</dbReference>
<organism>
    <name type="scientific">Bradyrhizobium sp. (strain ORS 278)</name>
    <dbReference type="NCBI Taxonomy" id="114615"/>
    <lineage>
        <taxon>Bacteria</taxon>
        <taxon>Pseudomonadati</taxon>
        <taxon>Pseudomonadota</taxon>
        <taxon>Alphaproteobacteria</taxon>
        <taxon>Hyphomicrobiales</taxon>
        <taxon>Nitrobacteraceae</taxon>
        <taxon>Bradyrhizobium</taxon>
    </lineage>
</organism>
<proteinExistence type="inferred from homology"/>